<reference evidence="3" key="1">
    <citation type="journal article" date="2009" name="Proteomics">
        <title>The neuropeptidome of Rhodnius prolixus brain.</title>
        <authorList>
            <person name="Ons S."/>
            <person name="Richter F."/>
            <person name="Urlaub H."/>
            <person name="Pomar R.R."/>
        </authorList>
    </citation>
    <scope>PROTEIN SEQUENCE</scope>
    <scope>MASS SPECTROMETRY</scope>
    <scope>PYROGLUTAMATE FORMATION AT GLN-1</scope>
    <scope>AMIDATION AT ARG-12</scope>
    <source>
        <tissue evidence="1">Brain</tissue>
    </source>
</reference>
<accession>P85809</accession>
<evidence type="ECO:0000269" key="1">
    <source>
    </source>
</evidence>
<evidence type="ECO:0000303" key="2">
    <source>
    </source>
</evidence>
<evidence type="ECO:0000305" key="3"/>
<keyword id="KW-0027">Amidation</keyword>
<keyword id="KW-0903">Direct protein sequencing</keyword>
<keyword id="KW-0527">Neuropeptide</keyword>
<keyword id="KW-0873">Pyrrolidone carboxylic acid</keyword>
<keyword id="KW-1185">Reference proteome</keyword>
<keyword id="KW-0964">Secreted</keyword>
<feature type="peptide" id="PRO_0000365759" description="Tachykinin-related peptide 8" evidence="1">
    <location>
        <begin position="1"/>
        <end position="12"/>
    </location>
</feature>
<feature type="peptide" id="PRO_0000365760" description="Tachykinin-related peptide 8(8-12)" evidence="1">
    <location>
        <begin position="8"/>
        <end position="12"/>
    </location>
</feature>
<feature type="modified residue" description="Pyrrolidone carboxylic acid" evidence="1">
    <location>
        <position position="1"/>
    </location>
</feature>
<feature type="modified residue" description="Arginine amide" evidence="1">
    <location>
        <position position="12"/>
    </location>
</feature>
<organism>
    <name type="scientific">Rhodnius prolixus</name>
    <name type="common">Triatomid bug</name>
    <dbReference type="NCBI Taxonomy" id="13249"/>
    <lineage>
        <taxon>Eukaryota</taxon>
        <taxon>Metazoa</taxon>
        <taxon>Ecdysozoa</taxon>
        <taxon>Arthropoda</taxon>
        <taxon>Hexapoda</taxon>
        <taxon>Insecta</taxon>
        <taxon>Pterygota</taxon>
        <taxon>Neoptera</taxon>
        <taxon>Paraneoptera</taxon>
        <taxon>Hemiptera</taxon>
        <taxon>Heteroptera</taxon>
        <taxon>Panheteroptera</taxon>
        <taxon>Cimicomorpha</taxon>
        <taxon>Reduviidae</taxon>
        <taxon>Triatominae</taxon>
        <taxon>Rhodnius</taxon>
    </lineage>
</organism>
<comment type="function">
    <text evidence="3">Myoactive peptide. Increases the amplitude and frequency of spontaneous contractions and tonus of hindgut muscle.</text>
</comment>
<comment type="subcellular location">
    <subcellularLocation>
        <location evidence="3">Secreted</location>
    </subcellularLocation>
</comment>
<comment type="mass spectrometry">
    <molecule>Tachykinin-related peptide 8</molecule>
</comment>
<comment type="mass spectrometry">
    <molecule>Tachykinin-related peptide 8(8-12)</molecule>
</comment>
<protein>
    <recommendedName>
        <fullName evidence="2">Tachykinin-related peptide 8</fullName>
        <shortName evidence="2">Rhopr-TRP-8</shortName>
    </recommendedName>
    <component>
        <recommendedName>
            <fullName evidence="2">Tachykinin-related peptide 8(8-12)</fullName>
            <shortName evidence="2">Rhopr-TRP-8(8-12)</shortName>
        </recommendedName>
    </component>
</protein>
<dbReference type="InParanoid" id="P85809"/>
<dbReference type="Proteomes" id="UP000015103">
    <property type="component" value="Unassembled WGS sequence"/>
</dbReference>
<dbReference type="GO" id="GO:0005576">
    <property type="term" value="C:extracellular region"/>
    <property type="evidence" value="ECO:0007669"/>
    <property type="project" value="UniProtKB-SubCell"/>
</dbReference>
<dbReference type="GO" id="GO:0007218">
    <property type="term" value="P:neuropeptide signaling pathway"/>
    <property type="evidence" value="ECO:0007669"/>
    <property type="project" value="UniProtKB-KW"/>
</dbReference>
<proteinExistence type="evidence at protein level"/>
<name>TRP8_RHOPR</name>
<sequence>QERRAMGFVGMR</sequence>